<dbReference type="EC" id="5.1.1.7" evidence="1"/>
<dbReference type="EMBL" id="BA000031">
    <property type="protein sequence ID" value="BAC61246.1"/>
    <property type="molecule type" value="Genomic_DNA"/>
</dbReference>
<dbReference type="RefSeq" id="NP_799362.1">
    <property type="nucleotide sequence ID" value="NC_004603.1"/>
</dbReference>
<dbReference type="RefSeq" id="WP_005459097.1">
    <property type="nucleotide sequence ID" value="NC_004603.1"/>
</dbReference>
<dbReference type="SMR" id="Q87KJ4"/>
<dbReference type="GeneID" id="1190569"/>
<dbReference type="KEGG" id="vpa:VP2983"/>
<dbReference type="PATRIC" id="fig|223926.6.peg.2871"/>
<dbReference type="eggNOG" id="COG0253">
    <property type="taxonomic scope" value="Bacteria"/>
</dbReference>
<dbReference type="HOGENOM" id="CLU_053306_1_1_6"/>
<dbReference type="UniPathway" id="UPA00034">
    <property type="reaction ID" value="UER00025"/>
</dbReference>
<dbReference type="Proteomes" id="UP000002493">
    <property type="component" value="Chromosome 1"/>
</dbReference>
<dbReference type="GO" id="GO:0005829">
    <property type="term" value="C:cytosol"/>
    <property type="evidence" value="ECO:0007669"/>
    <property type="project" value="TreeGrafter"/>
</dbReference>
<dbReference type="GO" id="GO:0008837">
    <property type="term" value="F:diaminopimelate epimerase activity"/>
    <property type="evidence" value="ECO:0007669"/>
    <property type="project" value="UniProtKB-UniRule"/>
</dbReference>
<dbReference type="GO" id="GO:0009089">
    <property type="term" value="P:lysine biosynthetic process via diaminopimelate"/>
    <property type="evidence" value="ECO:0007669"/>
    <property type="project" value="UniProtKB-UniRule"/>
</dbReference>
<dbReference type="FunFam" id="3.10.310.10:FF:000001">
    <property type="entry name" value="Diaminopimelate epimerase"/>
    <property type="match status" value="1"/>
</dbReference>
<dbReference type="FunFam" id="3.10.310.10:FF:000002">
    <property type="entry name" value="Diaminopimelate epimerase"/>
    <property type="match status" value="1"/>
</dbReference>
<dbReference type="Gene3D" id="3.10.310.10">
    <property type="entry name" value="Diaminopimelate Epimerase, Chain A, domain 1"/>
    <property type="match status" value="2"/>
</dbReference>
<dbReference type="HAMAP" id="MF_00197">
    <property type="entry name" value="DAP_epimerase"/>
    <property type="match status" value="1"/>
</dbReference>
<dbReference type="InterPro" id="IPR018510">
    <property type="entry name" value="DAP_epimerase_AS"/>
</dbReference>
<dbReference type="InterPro" id="IPR001653">
    <property type="entry name" value="DAP_epimerase_DapF"/>
</dbReference>
<dbReference type="NCBIfam" id="TIGR00652">
    <property type="entry name" value="DapF"/>
    <property type="match status" value="1"/>
</dbReference>
<dbReference type="PANTHER" id="PTHR31689:SF0">
    <property type="entry name" value="DIAMINOPIMELATE EPIMERASE"/>
    <property type="match status" value="1"/>
</dbReference>
<dbReference type="PANTHER" id="PTHR31689">
    <property type="entry name" value="DIAMINOPIMELATE EPIMERASE, CHLOROPLASTIC"/>
    <property type="match status" value="1"/>
</dbReference>
<dbReference type="Pfam" id="PF01678">
    <property type="entry name" value="DAP_epimerase"/>
    <property type="match status" value="2"/>
</dbReference>
<dbReference type="SUPFAM" id="SSF54506">
    <property type="entry name" value="Diaminopimelate epimerase-like"/>
    <property type="match status" value="1"/>
</dbReference>
<dbReference type="PROSITE" id="PS01326">
    <property type="entry name" value="DAP_EPIMERASE"/>
    <property type="match status" value="1"/>
</dbReference>
<organism>
    <name type="scientific">Vibrio parahaemolyticus serotype O3:K6 (strain RIMD 2210633)</name>
    <dbReference type="NCBI Taxonomy" id="223926"/>
    <lineage>
        <taxon>Bacteria</taxon>
        <taxon>Pseudomonadati</taxon>
        <taxon>Pseudomonadota</taxon>
        <taxon>Gammaproteobacteria</taxon>
        <taxon>Vibrionales</taxon>
        <taxon>Vibrionaceae</taxon>
        <taxon>Vibrio</taxon>
    </lineage>
</organism>
<name>DAPF_VIBPA</name>
<sequence length="276" mass="30315">MHFHFSKMHGLGNDFMVVDCITQNVFFSQDLIRRLADRHTGVGFDQLLVVEAPYDPETDFHYRIFNADGSEVEQCGNGARCFARFVRLKGLTNKYSISVSTKKGKMILDVEDDGEVTVNMGVPEFEPNKIPFKAKQKEKTYIMRAGDKTLFCGAVSMGNPHVVTVVDDVDTADVDTLGPLLESHERFPERVNAGFMQVVSRDHIRLRVYERGAGETQACGSGACGAVAVGILQGLLDESVKVSLPGGELHISWQGPGKPLFMTGPATHVFDGQLSC</sequence>
<protein>
    <recommendedName>
        <fullName evidence="1">Diaminopimelate epimerase</fullName>
        <shortName evidence="1">DAP epimerase</shortName>
        <ecNumber evidence="1">5.1.1.7</ecNumber>
    </recommendedName>
    <alternativeName>
        <fullName evidence="1">PLP-independent amino acid racemase</fullName>
    </alternativeName>
</protein>
<accession>Q87KJ4</accession>
<proteinExistence type="inferred from homology"/>
<feature type="chain" id="PRO_0000149876" description="Diaminopimelate epimerase">
    <location>
        <begin position="1"/>
        <end position="276"/>
    </location>
</feature>
<feature type="active site" description="Proton donor" evidence="1">
    <location>
        <position position="75"/>
    </location>
</feature>
<feature type="active site" description="Proton acceptor" evidence="1">
    <location>
        <position position="219"/>
    </location>
</feature>
<feature type="binding site" evidence="1">
    <location>
        <position position="13"/>
    </location>
    <ligand>
        <name>substrate</name>
    </ligand>
</feature>
<feature type="binding site" evidence="1">
    <location>
        <position position="46"/>
    </location>
    <ligand>
        <name>substrate</name>
    </ligand>
</feature>
<feature type="binding site" evidence="1">
    <location>
        <position position="66"/>
    </location>
    <ligand>
        <name>substrate</name>
    </ligand>
</feature>
<feature type="binding site" evidence="1">
    <location>
        <begin position="76"/>
        <end position="77"/>
    </location>
    <ligand>
        <name>substrate</name>
    </ligand>
</feature>
<feature type="binding site" evidence="1">
    <location>
        <position position="159"/>
    </location>
    <ligand>
        <name>substrate</name>
    </ligand>
</feature>
<feature type="binding site" evidence="1">
    <location>
        <position position="192"/>
    </location>
    <ligand>
        <name>substrate</name>
    </ligand>
</feature>
<feature type="binding site" evidence="1">
    <location>
        <begin position="210"/>
        <end position="211"/>
    </location>
    <ligand>
        <name>substrate</name>
    </ligand>
</feature>
<feature type="binding site" evidence="1">
    <location>
        <begin position="220"/>
        <end position="221"/>
    </location>
    <ligand>
        <name>substrate</name>
    </ligand>
</feature>
<feature type="site" description="Could be important to modulate the pK values of the two catalytic cysteine residues" evidence="1">
    <location>
        <position position="161"/>
    </location>
</feature>
<feature type="site" description="Could be important to modulate the pK values of the two catalytic cysteine residues" evidence="1">
    <location>
        <position position="210"/>
    </location>
</feature>
<feature type="site" description="Important for dimerization" evidence="1">
    <location>
        <position position="270"/>
    </location>
</feature>
<evidence type="ECO:0000255" key="1">
    <source>
        <dbReference type="HAMAP-Rule" id="MF_00197"/>
    </source>
</evidence>
<keyword id="KW-0028">Amino-acid biosynthesis</keyword>
<keyword id="KW-0963">Cytoplasm</keyword>
<keyword id="KW-0413">Isomerase</keyword>
<keyword id="KW-0457">Lysine biosynthesis</keyword>
<reference key="1">
    <citation type="journal article" date="2003" name="Lancet">
        <title>Genome sequence of Vibrio parahaemolyticus: a pathogenic mechanism distinct from that of V. cholerae.</title>
        <authorList>
            <person name="Makino K."/>
            <person name="Oshima K."/>
            <person name="Kurokawa K."/>
            <person name="Yokoyama K."/>
            <person name="Uda T."/>
            <person name="Tagomori K."/>
            <person name="Iijima Y."/>
            <person name="Najima M."/>
            <person name="Nakano M."/>
            <person name="Yamashita A."/>
            <person name="Kubota Y."/>
            <person name="Kimura S."/>
            <person name="Yasunaga T."/>
            <person name="Honda T."/>
            <person name="Shinagawa H."/>
            <person name="Hattori M."/>
            <person name="Iida T."/>
        </authorList>
    </citation>
    <scope>NUCLEOTIDE SEQUENCE [LARGE SCALE GENOMIC DNA]</scope>
    <source>
        <strain>RIMD 2210633</strain>
    </source>
</reference>
<comment type="function">
    <text evidence="1">Catalyzes the stereoinversion of LL-2,6-diaminopimelate (L,L-DAP) to meso-diaminopimelate (meso-DAP), a precursor of L-lysine and an essential component of the bacterial peptidoglycan.</text>
</comment>
<comment type="catalytic activity">
    <reaction evidence="1">
        <text>(2S,6S)-2,6-diaminopimelate = meso-2,6-diaminopimelate</text>
        <dbReference type="Rhea" id="RHEA:15393"/>
        <dbReference type="ChEBI" id="CHEBI:57609"/>
        <dbReference type="ChEBI" id="CHEBI:57791"/>
        <dbReference type="EC" id="5.1.1.7"/>
    </reaction>
</comment>
<comment type="pathway">
    <text evidence="1">Amino-acid biosynthesis; L-lysine biosynthesis via DAP pathway; DL-2,6-diaminopimelate from LL-2,6-diaminopimelate: step 1/1.</text>
</comment>
<comment type="subunit">
    <text evidence="1">Homodimer.</text>
</comment>
<comment type="subcellular location">
    <subcellularLocation>
        <location evidence="1">Cytoplasm</location>
    </subcellularLocation>
</comment>
<comment type="similarity">
    <text evidence="1">Belongs to the diaminopimelate epimerase family.</text>
</comment>
<gene>
    <name evidence="1" type="primary">dapF</name>
    <name type="ordered locus">VP2983</name>
</gene>